<dbReference type="EC" id="1.1.1.-" evidence="2"/>
<dbReference type="EMBL" id="AY554048">
    <property type="protein sequence ID" value="AAS68529.1"/>
    <property type="molecule type" value="mRNA"/>
</dbReference>
<dbReference type="EMBL" id="AB046006">
    <property type="protein sequence ID" value="BAB01588.1"/>
    <property type="molecule type" value="mRNA"/>
</dbReference>
<dbReference type="RefSeq" id="XP_005587693.1">
    <molecule id="Q6Q7D2-1"/>
    <property type="nucleotide sequence ID" value="XM_005587636.3"/>
</dbReference>
<dbReference type="RefSeq" id="XP_015295757.1">
    <property type="nucleotide sequence ID" value="XM_015440271.1"/>
</dbReference>
<dbReference type="SMR" id="Q6Q7D2"/>
<dbReference type="STRING" id="9541.ENSMFAP00000027179"/>
<dbReference type="GeneID" id="102133758"/>
<dbReference type="KEGG" id="mcf:102133758"/>
<dbReference type="CTD" id="374875"/>
<dbReference type="VEuPathDB" id="HostDB:ENSMFAG00000044973"/>
<dbReference type="eggNOG" id="KOG1205">
    <property type="taxonomic scope" value="Eukaryota"/>
</dbReference>
<dbReference type="OMA" id="EYTRWLM"/>
<dbReference type="Proteomes" id="UP000233100">
    <property type="component" value="Chromosome 19"/>
</dbReference>
<dbReference type="GO" id="GO:0005576">
    <property type="term" value="C:extracellular region"/>
    <property type="evidence" value="ECO:0007669"/>
    <property type="project" value="UniProtKB-SubCell"/>
</dbReference>
<dbReference type="GO" id="GO:0043231">
    <property type="term" value="C:intracellular membrane-bounded organelle"/>
    <property type="evidence" value="ECO:0007669"/>
    <property type="project" value="TreeGrafter"/>
</dbReference>
<dbReference type="GO" id="GO:0016491">
    <property type="term" value="F:oxidoreductase activity"/>
    <property type="evidence" value="ECO:0007669"/>
    <property type="project" value="UniProtKB-KW"/>
</dbReference>
<dbReference type="FunFam" id="3.40.50.720:FF:000359">
    <property type="entry name" value="hydroxysteroid 11-beta-dehydrogenase 1-like protein isoform X1"/>
    <property type="match status" value="1"/>
</dbReference>
<dbReference type="Gene3D" id="3.40.50.720">
    <property type="entry name" value="NAD(P)-binding Rossmann-like Domain"/>
    <property type="match status" value="1"/>
</dbReference>
<dbReference type="InterPro" id="IPR051253">
    <property type="entry name" value="11-beta-HSD"/>
</dbReference>
<dbReference type="InterPro" id="IPR036291">
    <property type="entry name" value="NAD(P)-bd_dom_sf"/>
</dbReference>
<dbReference type="InterPro" id="IPR020904">
    <property type="entry name" value="Sc_DH/Rdtase_CS"/>
</dbReference>
<dbReference type="InterPro" id="IPR002347">
    <property type="entry name" value="SDR_fam"/>
</dbReference>
<dbReference type="PANTHER" id="PTHR44279">
    <property type="entry name" value="HYDROXYSTEROID (11-BETA) DEHYDROGENASE 1-LIKE B-RELATED"/>
    <property type="match status" value="1"/>
</dbReference>
<dbReference type="PANTHER" id="PTHR44279:SF3">
    <property type="entry name" value="HYDROXYSTEROID 11-BETA-DEHYDROGENASE 1-LIKE PROTEIN"/>
    <property type="match status" value="1"/>
</dbReference>
<dbReference type="Pfam" id="PF00106">
    <property type="entry name" value="adh_short"/>
    <property type="match status" value="1"/>
</dbReference>
<dbReference type="PRINTS" id="PR00081">
    <property type="entry name" value="GDHRDH"/>
</dbReference>
<dbReference type="SUPFAM" id="SSF51735">
    <property type="entry name" value="NAD(P)-binding Rossmann-fold domains"/>
    <property type="match status" value="1"/>
</dbReference>
<dbReference type="PROSITE" id="PS00061">
    <property type="entry name" value="ADH_SHORT"/>
    <property type="match status" value="1"/>
</dbReference>
<name>DHI1L_MACFA</name>
<keyword id="KW-0025">Alternative splicing</keyword>
<keyword id="KW-0521">NADP</keyword>
<keyword id="KW-0560">Oxidoreductase</keyword>
<keyword id="KW-1185">Reference proteome</keyword>
<keyword id="KW-0964">Secreted</keyword>
<keyword id="KW-0732">Signal</keyword>
<gene>
    <name type="primary">HSD11B1L</name>
    <name type="synonym">HSD3</name>
    <name type="ORF">QccE-13246</name>
</gene>
<protein>
    <recommendedName>
        <fullName>Hydroxysteroid 11-beta-dehydrogenase 1-like protein</fullName>
        <ecNumber evidence="2">1.1.1.-</ecNumber>
    </recommendedName>
    <alternativeName>
        <fullName>11-beta-hydroxysteroid dehydrogenase type 3</fullName>
        <shortName>11-DH3</shortName>
        <shortName>11-beta-HSD3</shortName>
    </alternativeName>
</protein>
<feature type="signal peptide" evidence="3">
    <location>
        <begin position="1"/>
        <end position="15"/>
    </location>
</feature>
<feature type="chain" id="PRO_0000316817" description="Hydroxysteroid 11-beta-dehydrogenase 1-like protein">
    <location>
        <begin position="16"/>
        <end position="287"/>
    </location>
</feature>
<feature type="active site" description="Proton acceptor" evidence="4">
    <location>
        <position position="178"/>
    </location>
</feature>
<feature type="binding site" evidence="1">
    <location>
        <begin position="36"/>
        <end position="62"/>
    </location>
    <ligand>
        <name>NADP(+)</name>
        <dbReference type="ChEBI" id="CHEBI:58349"/>
    </ligand>
</feature>
<feature type="binding site" evidence="1">
    <location>
        <begin position="87"/>
        <end position="88"/>
    </location>
    <ligand>
        <name>NADP(+)</name>
        <dbReference type="ChEBI" id="CHEBI:58349"/>
    </ligand>
</feature>
<feature type="binding site" evidence="1">
    <location>
        <begin position="114"/>
        <end position="116"/>
    </location>
    <ligand>
        <name>NADP(+)</name>
        <dbReference type="ChEBI" id="CHEBI:58349"/>
    </ligand>
</feature>
<feature type="binding site" evidence="1">
    <location>
        <position position="165"/>
    </location>
    <ligand>
        <name>substrate</name>
    </ligand>
</feature>
<feature type="binding site" evidence="1">
    <location>
        <begin position="178"/>
        <end position="182"/>
    </location>
    <ligand>
        <name>NADP(+)</name>
        <dbReference type="ChEBI" id="CHEBI:58349"/>
    </ligand>
</feature>
<feature type="binding site" evidence="1">
    <location>
        <begin position="211"/>
        <end position="217"/>
    </location>
    <ligand>
        <name>NADP(+)</name>
        <dbReference type="ChEBI" id="CHEBI:58349"/>
    </ligand>
</feature>
<feature type="splice variant" id="VSP_030798" description="In isoform 2." evidence="5">
    <location>
        <begin position="1"/>
        <end position="87"/>
    </location>
</feature>
<feature type="splice variant" id="VSP_030799" description="In isoform 2." evidence="5">
    <original>M</original>
    <variation>MQAPPLPVTRECHL</variation>
    <location>
        <position position="135"/>
    </location>
</feature>
<evidence type="ECO:0000250" key="1"/>
<evidence type="ECO:0000250" key="2">
    <source>
        <dbReference type="UniProtKB" id="Q7Z5J1"/>
    </source>
</evidence>
<evidence type="ECO:0000255" key="3"/>
<evidence type="ECO:0000255" key="4">
    <source>
        <dbReference type="PROSITE-ProRule" id="PRU10001"/>
    </source>
</evidence>
<evidence type="ECO:0000303" key="5">
    <source>
    </source>
</evidence>
<evidence type="ECO:0000305" key="6"/>
<reference key="1">
    <citation type="submission" date="2004-02" db="EMBL/GenBank/DDBJ databases">
        <authorList>
            <person name="Huang C.Q."/>
            <person name="Wu S.L."/>
            <person name="Zhou J.L."/>
        </authorList>
    </citation>
    <scope>NUCLEOTIDE SEQUENCE [MRNA] (ISOFORM 1)</scope>
</reference>
<reference key="2">
    <citation type="journal article" date="2001" name="Gene">
        <title>Assignment of 118 novel cDNAs of cynomolgus monkey brain to human chromosomes.</title>
        <authorList>
            <person name="Osada N."/>
            <person name="Hida M."/>
            <person name="Kususda J."/>
            <person name="Tanuma R."/>
            <person name="Iseki K."/>
            <person name="Hirata M."/>
            <person name="Suto Y."/>
            <person name="Hirai M."/>
            <person name="Terao K."/>
            <person name="Suzuki Y."/>
            <person name="Sugano S."/>
            <person name="Hashimoto K."/>
        </authorList>
    </citation>
    <scope>NUCLEOTIDE SEQUENCE [LARGE SCALE MRNA] (ISOFORM 2)</scope>
    <source>
        <tissue>Brain cortex</tissue>
    </source>
</reference>
<reference key="3">
    <citation type="journal article" date="2001" name="Gene">
        <authorList>
            <person name="Osada N."/>
            <person name="Hida M."/>
            <person name="Kusuda J."/>
            <person name="Tanuma R."/>
            <person name="Iseki K."/>
            <person name="Hirata M."/>
            <person name="Suto Y."/>
            <person name="Hirai M."/>
            <person name="Terao K."/>
            <person name="Suzuki Y."/>
            <person name="Sugano S."/>
            <person name="Hashimoto K."/>
            <person name="Kususda J."/>
        </authorList>
    </citation>
    <scope>ERRATUM OF PUBMED:11574149</scope>
</reference>
<proteinExistence type="evidence at transcript level"/>
<accession>Q6Q7D2</accession>
<accession>Q9N0C4</accession>
<organism>
    <name type="scientific">Macaca fascicularis</name>
    <name type="common">Crab-eating macaque</name>
    <name type="synonym">Cynomolgus monkey</name>
    <dbReference type="NCBI Taxonomy" id="9541"/>
    <lineage>
        <taxon>Eukaryota</taxon>
        <taxon>Metazoa</taxon>
        <taxon>Chordata</taxon>
        <taxon>Craniata</taxon>
        <taxon>Vertebrata</taxon>
        <taxon>Euteleostomi</taxon>
        <taxon>Mammalia</taxon>
        <taxon>Eutheria</taxon>
        <taxon>Euarchontoglires</taxon>
        <taxon>Primates</taxon>
        <taxon>Haplorrhini</taxon>
        <taxon>Catarrhini</taxon>
        <taxon>Cercopithecidae</taxon>
        <taxon>Cercopithecinae</taxon>
        <taxon>Macaca</taxon>
    </lineage>
</organism>
<sequence length="287" mass="30945">MKVLLLTGLGALFFAYYWDDNFDPASLQGARVLLTGASAGVGEELAYHYARLGSHLVLTAHTEALLQKVVGNCRKLGAPKVFYIAADMASPEAPESVVQFALDKLGGLDYLVLNHIGGVPAGTRARTPQATRWLMQVNFLSYVQLTSRALPSLTDSKGSLVVVSSLLGRVPTSFSTPYSAAKFALDSFFGSLRRELDVQDVNVAITMCVLGLRDRASAAEAVRGVTRVKAAPGPKAALAVIRGGATRAAGVFYPWRFHLLCLLRRWLPRPRAWFIRQDLNVTAAAAA</sequence>
<comment type="function">
    <text evidence="2">Unidirectional NADP(+)-dependent cortisol dehydrogenase (in vitro).</text>
</comment>
<comment type="catalytic activity">
    <reaction evidence="2">
        <text>cortisone + NADPH + H(+) = cortisol + NADP(+)</text>
        <dbReference type="Rhea" id="RHEA:68616"/>
        <dbReference type="ChEBI" id="CHEBI:15378"/>
        <dbReference type="ChEBI" id="CHEBI:16962"/>
        <dbReference type="ChEBI" id="CHEBI:17650"/>
        <dbReference type="ChEBI" id="CHEBI:57783"/>
        <dbReference type="ChEBI" id="CHEBI:58349"/>
    </reaction>
    <physiologicalReaction direction="right-to-left" evidence="2">
        <dbReference type="Rhea" id="RHEA:68618"/>
    </physiologicalReaction>
</comment>
<comment type="subcellular location">
    <subcellularLocation>
        <location evidence="6">Secreted</location>
    </subcellularLocation>
</comment>
<comment type="alternative products">
    <event type="alternative splicing"/>
    <isoform>
        <id>Q6Q7D2-1</id>
        <name>1</name>
        <sequence type="displayed"/>
    </isoform>
    <isoform>
        <id>Q6Q7D2-2</id>
        <name>2</name>
        <sequence type="described" ref="VSP_030798 VSP_030799"/>
    </isoform>
</comment>
<comment type="similarity">
    <text evidence="6">Belongs to the short-chain dehydrogenases/reductases (SDR) family.</text>
</comment>
<comment type="caution">
    <text evidence="6">Present in human, non-human primate, sheep, pig and many other higher organisms, whereas an ortholog is absent in the genomes of mouse, rat and rabbit.</text>
</comment>